<reference key="1">
    <citation type="journal article" date="2005" name="Genome Res.">
        <title>Sequence, annotation, and analysis of synteny between rice chromosome 3 and diverged grass species.</title>
        <authorList>
            <consortium name="The rice chromosome 3 sequencing consortium"/>
            <person name="Buell C.R."/>
            <person name="Yuan Q."/>
            <person name="Ouyang S."/>
            <person name="Liu J."/>
            <person name="Zhu W."/>
            <person name="Wang A."/>
            <person name="Maiti R."/>
            <person name="Haas B."/>
            <person name="Wortman J."/>
            <person name="Pertea M."/>
            <person name="Jones K.M."/>
            <person name="Kim M."/>
            <person name="Overton L."/>
            <person name="Tsitrin T."/>
            <person name="Fadrosh D."/>
            <person name="Bera J."/>
            <person name="Weaver B."/>
            <person name="Jin S."/>
            <person name="Johri S."/>
            <person name="Reardon M."/>
            <person name="Webb K."/>
            <person name="Hill J."/>
            <person name="Moffat K."/>
            <person name="Tallon L."/>
            <person name="Van Aken S."/>
            <person name="Lewis M."/>
            <person name="Utterback T."/>
            <person name="Feldblyum T."/>
            <person name="Zismann V."/>
            <person name="Iobst S."/>
            <person name="Hsiao J."/>
            <person name="de Vazeille A.R."/>
            <person name="Salzberg S.L."/>
            <person name="White O."/>
            <person name="Fraser C.M."/>
            <person name="Yu Y."/>
            <person name="Kim H."/>
            <person name="Rambo T."/>
            <person name="Currie J."/>
            <person name="Collura K."/>
            <person name="Kernodle-Thompson S."/>
            <person name="Wei F."/>
            <person name="Kudrna K."/>
            <person name="Ammiraju J.S.S."/>
            <person name="Luo M."/>
            <person name="Goicoechea J.L."/>
            <person name="Wing R.A."/>
            <person name="Henry D."/>
            <person name="Oates R."/>
            <person name="Palmer M."/>
            <person name="Pries G."/>
            <person name="Saski C."/>
            <person name="Simmons J."/>
            <person name="Soderlund C."/>
            <person name="Nelson W."/>
            <person name="de la Bastide M."/>
            <person name="Spiegel L."/>
            <person name="Nascimento L."/>
            <person name="Huang E."/>
            <person name="Preston R."/>
            <person name="Zutavern T."/>
            <person name="Palmer L."/>
            <person name="O'Shaughnessy A."/>
            <person name="Dike S."/>
            <person name="McCombie W.R."/>
            <person name="Minx P."/>
            <person name="Cordum H."/>
            <person name="Wilson R."/>
            <person name="Jin W."/>
            <person name="Lee H.R."/>
            <person name="Jiang J."/>
            <person name="Jackson S."/>
        </authorList>
    </citation>
    <scope>NUCLEOTIDE SEQUENCE [LARGE SCALE GENOMIC DNA]</scope>
    <source>
        <strain>cv. Nipponbare</strain>
    </source>
</reference>
<reference key="2">
    <citation type="journal article" date="2005" name="Nature">
        <title>The map-based sequence of the rice genome.</title>
        <authorList>
            <consortium name="International rice genome sequencing project (IRGSP)"/>
        </authorList>
    </citation>
    <scope>NUCLEOTIDE SEQUENCE [LARGE SCALE GENOMIC DNA]</scope>
    <source>
        <strain>cv. Nipponbare</strain>
    </source>
</reference>
<reference key="3">
    <citation type="journal article" date="2008" name="Nucleic Acids Res.">
        <title>The rice annotation project database (RAP-DB): 2008 update.</title>
        <authorList>
            <consortium name="The rice annotation project (RAP)"/>
        </authorList>
    </citation>
    <scope>GENOME REANNOTATION</scope>
    <source>
        <strain>cv. Nipponbare</strain>
    </source>
</reference>
<reference key="4">
    <citation type="journal article" date="2013" name="Rice">
        <title>Improvement of the Oryza sativa Nipponbare reference genome using next generation sequence and optical map data.</title>
        <authorList>
            <person name="Kawahara Y."/>
            <person name="de la Bastide M."/>
            <person name="Hamilton J.P."/>
            <person name="Kanamori H."/>
            <person name="McCombie W.R."/>
            <person name="Ouyang S."/>
            <person name="Schwartz D.C."/>
            <person name="Tanaka T."/>
            <person name="Wu J."/>
            <person name="Zhou S."/>
            <person name="Childs K.L."/>
            <person name="Davidson R.M."/>
            <person name="Lin H."/>
            <person name="Quesada-Ocampo L."/>
            <person name="Vaillancourt B."/>
            <person name="Sakai H."/>
            <person name="Lee S.S."/>
            <person name="Kim J."/>
            <person name="Numa H."/>
            <person name="Itoh T."/>
            <person name="Buell C.R."/>
            <person name="Matsumoto T."/>
        </authorList>
    </citation>
    <scope>GENOME REANNOTATION</scope>
    <source>
        <strain>cv. Nipponbare</strain>
    </source>
</reference>
<reference key="5">
    <citation type="journal article" date="2005" name="PLoS Biol.">
        <title>The genomes of Oryza sativa: a history of duplications.</title>
        <authorList>
            <person name="Yu J."/>
            <person name="Wang J."/>
            <person name="Lin W."/>
            <person name="Li S."/>
            <person name="Li H."/>
            <person name="Zhou J."/>
            <person name="Ni P."/>
            <person name="Dong W."/>
            <person name="Hu S."/>
            <person name="Zeng C."/>
            <person name="Zhang J."/>
            <person name="Zhang Y."/>
            <person name="Li R."/>
            <person name="Xu Z."/>
            <person name="Li S."/>
            <person name="Li X."/>
            <person name="Zheng H."/>
            <person name="Cong L."/>
            <person name="Lin L."/>
            <person name="Yin J."/>
            <person name="Geng J."/>
            <person name="Li G."/>
            <person name="Shi J."/>
            <person name="Liu J."/>
            <person name="Lv H."/>
            <person name="Li J."/>
            <person name="Wang J."/>
            <person name="Deng Y."/>
            <person name="Ran L."/>
            <person name="Shi X."/>
            <person name="Wang X."/>
            <person name="Wu Q."/>
            <person name="Li C."/>
            <person name="Ren X."/>
            <person name="Wang J."/>
            <person name="Wang X."/>
            <person name="Li D."/>
            <person name="Liu D."/>
            <person name="Zhang X."/>
            <person name="Ji Z."/>
            <person name="Zhao W."/>
            <person name="Sun Y."/>
            <person name="Zhang Z."/>
            <person name="Bao J."/>
            <person name="Han Y."/>
            <person name="Dong L."/>
            <person name="Ji J."/>
            <person name="Chen P."/>
            <person name="Wu S."/>
            <person name="Liu J."/>
            <person name="Xiao Y."/>
            <person name="Bu D."/>
            <person name="Tan J."/>
            <person name="Yang L."/>
            <person name="Ye C."/>
            <person name="Zhang J."/>
            <person name="Xu J."/>
            <person name="Zhou Y."/>
            <person name="Yu Y."/>
            <person name="Zhang B."/>
            <person name="Zhuang S."/>
            <person name="Wei H."/>
            <person name="Liu B."/>
            <person name="Lei M."/>
            <person name="Yu H."/>
            <person name="Li Y."/>
            <person name="Xu H."/>
            <person name="Wei S."/>
            <person name="He X."/>
            <person name="Fang L."/>
            <person name="Zhang Z."/>
            <person name="Zhang Y."/>
            <person name="Huang X."/>
            <person name="Su Z."/>
            <person name="Tong W."/>
            <person name="Li J."/>
            <person name="Tong Z."/>
            <person name="Li S."/>
            <person name="Ye J."/>
            <person name="Wang L."/>
            <person name="Fang L."/>
            <person name="Lei T."/>
            <person name="Chen C.-S."/>
            <person name="Chen H.-C."/>
            <person name="Xu Z."/>
            <person name="Li H."/>
            <person name="Huang H."/>
            <person name="Zhang F."/>
            <person name="Xu H."/>
            <person name="Li N."/>
            <person name="Zhao C."/>
            <person name="Li S."/>
            <person name="Dong L."/>
            <person name="Huang Y."/>
            <person name="Li L."/>
            <person name="Xi Y."/>
            <person name="Qi Q."/>
            <person name="Li W."/>
            <person name="Zhang B."/>
            <person name="Hu W."/>
            <person name="Zhang Y."/>
            <person name="Tian X."/>
            <person name="Jiao Y."/>
            <person name="Liang X."/>
            <person name="Jin J."/>
            <person name="Gao L."/>
            <person name="Zheng W."/>
            <person name="Hao B."/>
            <person name="Liu S.-M."/>
            <person name="Wang W."/>
            <person name="Yuan L."/>
            <person name="Cao M."/>
            <person name="McDermott J."/>
            <person name="Samudrala R."/>
            <person name="Wang J."/>
            <person name="Wong G.K.-S."/>
            <person name="Yang H."/>
        </authorList>
    </citation>
    <scope>NUCLEOTIDE SEQUENCE [LARGE SCALE GENOMIC DNA]</scope>
    <source>
        <strain>cv. Nipponbare</strain>
    </source>
</reference>
<reference key="6">
    <citation type="journal article" date="2005" name="Plant Cell Physiol.">
        <title>Genome-wide identification of the rice calcium-dependent protein kinase and its closely related kinase gene families: comprehensive analysis of the CDPKs gene family in rice.</title>
        <authorList>
            <person name="Asano T."/>
            <person name="Tanaka N."/>
            <person name="Yang G."/>
            <person name="Hayashi N."/>
            <person name="Komatsu S."/>
        </authorList>
    </citation>
    <scope>GENE FAMILY</scope>
    <scope>NOMENCLATURE</scope>
</reference>
<organism>
    <name type="scientific">Oryza sativa subsp. japonica</name>
    <name type="common">Rice</name>
    <dbReference type="NCBI Taxonomy" id="39947"/>
    <lineage>
        <taxon>Eukaryota</taxon>
        <taxon>Viridiplantae</taxon>
        <taxon>Streptophyta</taxon>
        <taxon>Embryophyta</taxon>
        <taxon>Tracheophyta</taxon>
        <taxon>Spermatophyta</taxon>
        <taxon>Magnoliopsida</taxon>
        <taxon>Liliopsida</taxon>
        <taxon>Poales</taxon>
        <taxon>Poaceae</taxon>
        <taxon>BOP clade</taxon>
        <taxon>Oryzoideae</taxon>
        <taxon>Oryzeae</taxon>
        <taxon>Oryzinae</taxon>
        <taxon>Oryza</taxon>
        <taxon>Oryza sativa</taxon>
    </lineage>
</organism>
<comment type="function">
    <text evidence="1">May play a role in signal transduction pathways that involve calcium as a second messenger.</text>
</comment>
<comment type="catalytic activity">
    <reaction evidence="7">
        <text>L-seryl-[protein] + ATP = O-phospho-L-seryl-[protein] + ADP + H(+)</text>
        <dbReference type="Rhea" id="RHEA:17989"/>
        <dbReference type="Rhea" id="RHEA-COMP:9863"/>
        <dbReference type="Rhea" id="RHEA-COMP:11604"/>
        <dbReference type="ChEBI" id="CHEBI:15378"/>
        <dbReference type="ChEBI" id="CHEBI:29999"/>
        <dbReference type="ChEBI" id="CHEBI:30616"/>
        <dbReference type="ChEBI" id="CHEBI:83421"/>
        <dbReference type="ChEBI" id="CHEBI:456216"/>
        <dbReference type="EC" id="2.7.11.1"/>
    </reaction>
</comment>
<comment type="catalytic activity">
    <reaction evidence="7">
        <text>L-threonyl-[protein] + ATP = O-phospho-L-threonyl-[protein] + ADP + H(+)</text>
        <dbReference type="Rhea" id="RHEA:46608"/>
        <dbReference type="Rhea" id="RHEA-COMP:11060"/>
        <dbReference type="Rhea" id="RHEA-COMP:11605"/>
        <dbReference type="ChEBI" id="CHEBI:15378"/>
        <dbReference type="ChEBI" id="CHEBI:30013"/>
        <dbReference type="ChEBI" id="CHEBI:30616"/>
        <dbReference type="ChEBI" id="CHEBI:61977"/>
        <dbReference type="ChEBI" id="CHEBI:456216"/>
        <dbReference type="EC" id="2.7.11.1"/>
    </reaction>
</comment>
<comment type="activity regulation">
    <text evidence="1">Activated by calcium. Autophosphorylation may play an important role in the regulation of the kinase activity.</text>
</comment>
<comment type="subcellular location">
    <subcellularLocation>
        <location evidence="7">Membrane</location>
        <topology evidence="7">Lipid-anchor</topology>
    </subcellularLocation>
</comment>
<comment type="domain">
    <text evidence="1">There are 3 contiguous domains conserved in the CDPK subfamily: a kinase domain, an autoinhibitory (junction) domain and a calmodulin-like domain. The autoinhibitory domain (377-407) inactivates kinase activity under calcium-free conditions.</text>
</comment>
<comment type="similarity">
    <text evidence="7">Belongs to the protein kinase superfamily. Ser/Thr protein kinase family. CDPK subfamily.</text>
</comment>
<comment type="sequence caution" evidence="7">
    <conflict type="erroneous gene model prediction">
        <sequence resource="EMBL-CDS" id="BAS86760"/>
    </conflict>
</comment>
<dbReference type="EC" id="2.7.11.1" evidence="7"/>
<dbReference type="EMBL" id="AC084296">
    <property type="protein sequence ID" value="AAT75264.1"/>
    <property type="molecule type" value="Genomic_DNA"/>
</dbReference>
<dbReference type="EMBL" id="AC087096">
    <property type="protein sequence ID" value="AAO24908.1"/>
    <property type="molecule type" value="Genomic_DNA"/>
</dbReference>
<dbReference type="EMBL" id="DP000009">
    <property type="protein sequence ID" value="ABF99263.1"/>
    <property type="molecule type" value="Genomic_DNA"/>
</dbReference>
<dbReference type="EMBL" id="AP008209">
    <property type="protein sequence ID" value="BAF13421.1"/>
    <property type="molecule type" value="Genomic_DNA"/>
</dbReference>
<dbReference type="EMBL" id="AP014959">
    <property type="protein sequence ID" value="BAS86760.1"/>
    <property type="status" value="ALT_SEQ"/>
    <property type="molecule type" value="Genomic_DNA"/>
</dbReference>
<dbReference type="EMBL" id="CM000140">
    <property type="protein sequence ID" value="EAZ28850.1"/>
    <property type="molecule type" value="Genomic_DNA"/>
</dbReference>
<dbReference type="RefSeq" id="XP_015629654.1">
    <property type="nucleotide sequence ID" value="XM_015774168.1"/>
</dbReference>
<dbReference type="SMR" id="Q852N6"/>
<dbReference type="FunCoup" id="Q852N6">
    <property type="interactions" value="1819"/>
</dbReference>
<dbReference type="STRING" id="39947.Q852N6"/>
<dbReference type="PaxDb" id="39947-Q852N6"/>
<dbReference type="KEGG" id="dosa:Os03g0789000"/>
<dbReference type="eggNOG" id="KOG0032">
    <property type="taxonomic scope" value="Eukaryota"/>
</dbReference>
<dbReference type="InParanoid" id="Q852N6"/>
<dbReference type="OrthoDB" id="40902at2759"/>
<dbReference type="Proteomes" id="UP000000763">
    <property type="component" value="Chromosome 3"/>
</dbReference>
<dbReference type="Proteomes" id="UP000007752">
    <property type="component" value="Chromosome 3"/>
</dbReference>
<dbReference type="Proteomes" id="UP000059680">
    <property type="component" value="Chromosome 3"/>
</dbReference>
<dbReference type="GO" id="GO:0005737">
    <property type="term" value="C:cytoplasm"/>
    <property type="evidence" value="ECO:0000318"/>
    <property type="project" value="GO_Central"/>
</dbReference>
<dbReference type="GO" id="GO:0016020">
    <property type="term" value="C:membrane"/>
    <property type="evidence" value="ECO:0007669"/>
    <property type="project" value="UniProtKB-SubCell"/>
</dbReference>
<dbReference type="GO" id="GO:0005634">
    <property type="term" value="C:nucleus"/>
    <property type="evidence" value="ECO:0000318"/>
    <property type="project" value="GO_Central"/>
</dbReference>
<dbReference type="GO" id="GO:0005524">
    <property type="term" value="F:ATP binding"/>
    <property type="evidence" value="ECO:0007669"/>
    <property type="project" value="UniProtKB-KW"/>
</dbReference>
<dbReference type="GO" id="GO:0005509">
    <property type="term" value="F:calcium ion binding"/>
    <property type="evidence" value="ECO:0007669"/>
    <property type="project" value="InterPro"/>
</dbReference>
<dbReference type="GO" id="GO:0009931">
    <property type="term" value="F:calcium-dependent protein serine/threonine kinase activity"/>
    <property type="evidence" value="ECO:0000318"/>
    <property type="project" value="GO_Central"/>
</dbReference>
<dbReference type="GO" id="GO:0004683">
    <property type="term" value="F:calcium/calmodulin-dependent protein kinase activity"/>
    <property type="evidence" value="ECO:0000318"/>
    <property type="project" value="GO_Central"/>
</dbReference>
<dbReference type="GO" id="GO:0005516">
    <property type="term" value="F:calmodulin binding"/>
    <property type="evidence" value="ECO:0000318"/>
    <property type="project" value="GO_Central"/>
</dbReference>
<dbReference type="GO" id="GO:0106310">
    <property type="term" value="F:protein serine kinase activity"/>
    <property type="evidence" value="ECO:0007669"/>
    <property type="project" value="RHEA"/>
</dbReference>
<dbReference type="GO" id="GO:0035556">
    <property type="term" value="P:intracellular signal transduction"/>
    <property type="evidence" value="ECO:0000318"/>
    <property type="project" value="GO_Central"/>
</dbReference>
<dbReference type="CDD" id="cd00051">
    <property type="entry name" value="EFh"/>
    <property type="match status" value="2"/>
</dbReference>
<dbReference type="CDD" id="cd05117">
    <property type="entry name" value="STKc_CAMK"/>
    <property type="match status" value="1"/>
</dbReference>
<dbReference type="FunFam" id="1.10.238.10:FF:000015">
    <property type="entry name" value="Calcium-dependent protein kinase 1"/>
    <property type="match status" value="1"/>
</dbReference>
<dbReference type="FunFam" id="3.30.200.20:FF:000004">
    <property type="entry name" value="Calcium-dependent protein kinase 1"/>
    <property type="match status" value="1"/>
</dbReference>
<dbReference type="FunFam" id="1.10.510.10:FF:000249">
    <property type="entry name" value="Calcium-dependent protein kinase SK5"/>
    <property type="match status" value="1"/>
</dbReference>
<dbReference type="Gene3D" id="1.10.238.10">
    <property type="entry name" value="EF-hand"/>
    <property type="match status" value="2"/>
</dbReference>
<dbReference type="Gene3D" id="3.30.200.20">
    <property type="entry name" value="Phosphorylase Kinase, domain 1"/>
    <property type="match status" value="1"/>
</dbReference>
<dbReference type="Gene3D" id="1.10.510.10">
    <property type="entry name" value="Transferase(Phosphotransferase) domain 1"/>
    <property type="match status" value="1"/>
</dbReference>
<dbReference type="InterPro" id="IPR050205">
    <property type="entry name" value="CDPK_Ser/Thr_kinases"/>
</dbReference>
<dbReference type="InterPro" id="IPR011992">
    <property type="entry name" value="EF-hand-dom_pair"/>
</dbReference>
<dbReference type="InterPro" id="IPR018247">
    <property type="entry name" value="EF_Hand_1_Ca_BS"/>
</dbReference>
<dbReference type="InterPro" id="IPR002048">
    <property type="entry name" value="EF_hand_dom"/>
</dbReference>
<dbReference type="InterPro" id="IPR011009">
    <property type="entry name" value="Kinase-like_dom_sf"/>
</dbReference>
<dbReference type="InterPro" id="IPR000719">
    <property type="entry name" value="Prot_kinase_dom"/>
</dbReference>
<dbReference type="InterPro" id="IPR017441">
    <property type="entry name" value="Protein_kinase_ATP_BS"/>
</dbReference>
<dbReference type="InterPro" id="IPR008271">
    <property type="entry name" value="Ser/Thr_kinase_AS"/>
</dbReference>
<dbReference type="PANTHER" id="PTHR24349">
    <property type="entry name" value="SERINE/THREONINE-PROTEIN KINASE"/>
    <property type="match status" value="1"/>
</dbReference>
<dbReference type="Pfam" id="PF13499">
    <property type="entry name" value="EF-hand_7"/>
    <property type="match status" value="2"/>
</dbReference>
<dbReference type="Pfam" id="PF00069">
    <property type="entry name" value="Pkinase"/>
    <property type="match status" value="1"/>
</dbReference>
<dbReference type="SMART" id="SM00054">
    <property type="entry name" value="EFh"/>
    <property type="match status" value="4"/>
</dbReference>
<dbReference type="SMART" id="SM00220">
    <property type="entry name" value="S_TKc"/>
    <property type="match status" value="1"/>
</dbReference>
<dbReference type="SUPFAM" id="SSF47473">
    <property type="entry name" value="EF-hand"/>
    <property type="match status" value="1"/>
</dbReference>
<dbReference type="SUPFAM" id="SSF56112">
    <property type="entry name" value="Protein kinase-like (PK-like)"/>
    <property type="match status" value="1"/>
</dbReference>
<dbReference type="PROSITE" id="PS00018">
    <property type="entry name" value="EF_HAND_1"/>
    <property type="match status" value="4"/>
</dbReference>
<dbReference type="PROSITE" id="PS50222">
    <property type="entry name" value="EF_HAND_2"/>
    <property type="match status" value="4"/>
</dbReference>
<dbReference type="PROSITE" id="PS00107">
    <property type="entry name" value="PROTEIN_KINASE_ATP"/>
    <property type="match status" value="1"/>
</dbReference>
<dbReference type="PROSITE" id="PS50011">
    <property type="entry name" value="PROTEIN_KINASE_DOM"/>
    <property type="match status" value="1"/>
</dbReference>
<dbReference type="PROSITE" id="PS00108">
    <property type="entry name" value="PROTEIN_KINASE_ST"/>
    <property type="match status" value="1"/>
</dbReference>
<feature type="initiator methionine" description="Removed" evidence="2">
    <location>
        <position position="1"/>
    </location>
</feature>
<feature type="chain" id="PRO_0000437555" description="Calcium-dependent protein kinase 11">
    <location>
        <begin position="2"/>
        <end position="576"/>
    </location>
</feature>
<feature type="domain" description="Protein kinase" evidence="3">
    <location>
        <begin position="113"/>
        <end position="371"/>
    </location>
</feature>
<feature type="domain" description="EF-hand 1" evidence="4">
    <location>
        <begin position="414"/>
        <end position="449"/>
    </location>
</feature>
<feature type="domain" description="EF-hand 2" evidence="4">
    <location>
        <begin position="450"/>
        <end position="485"/>
    </location>
</feature>
<feature type="domain" description="EF-hand 3" evidence="4">
    <location>
        <begin position="486"/>
        <end position="521"/>
    </location>
</feature>
<feature type="domain" description="EF-hand 4" evidence="4">
    <location>
        <begin position="522"/>
        <end position="555"/>
    </location>
</feature>
<feature type="region of interest" description="Disordered" evidence="5">
    <location>
        <begin position="27"/>
        <end position="88"/>
    </location>
</feature>
<feature type="region of interest" description="Autoinhibitory domain" evidence="1">
    <location>
        <begin position="377"/>
        <end position="407"/>
    </location>
</feature>
<feature type="compositionally biased region" description="Low complexity" evidence="5">
    <location>
        <begin position="41"/>
        <end position="56"/>
    </location>
</feature>
<feature type="active site" description="Proton acceptor" evidence="3">
    <location>
        <position position="237"/>
    </location>
</feature>
<feature type="binding site" evidence="3">
    <location>
        <begin position="119"/>
        <end position="127"/>
    </location>
    <ligand>
        <name>ATP</name>
        <dbReference type="ChEBI" id="CHEBI:30616"/>
    </ligand>
</feature>
<feature type="binding site" evidence="3">
    <location>
        <position position="142"/>
    </location>
    <ligand>
        <name>ATP</name>
        <dbReference type="ChEBI" id="CHEBI:30616"/>
    </ligand>
</feature>
<feature type="binding site" evidence="4">
    <location>
        <position position="427"/>
    </location>
    <ligand>
        <name>Ca(2+)</name>
        <dbReference type="ChEBI" id="CHEBI:29108"/>
        <label>1</label>
    </ligand>
</feature>
<feature type="binding site" evidence="4">
    <location>
        <position position="429"/>
    </location>
    <ligand>
        <name>Ca(2+)</name>
        <dbReference type="ChEBI" id="CHEBI:29108"/>
        <label>1</label>
    </ligand>
</feature>
<feature type="binding site" evidence="4">
    <location>
        <position position="431"/>
    </location>
    <ligand>
        <name>Ca(2+)</name>
        <dbReference type="ChEBI" id="CHEBI:29108"/>
        <label>1</label>
    </ligand>
</feature>
<feature type="binding site" evidence="4">
    <location>
        <position position="433"/>
    </location>
    <ligand>
        <name>Ca(2+)</name>
        <dbReference type="ChEBI" id="CHEBI:29108"/>
        <label>1</label>
    </ligand>
</feature>
<feature type="binding site" evidence="4">
    <location>
        <position position="438"/>
    </location>
    <ligand>
        <name>Ca(2+)</name>
        <dbReference type="ChEBI" id="CHEBI:29108"/>
        <label>1</label>
    </ligand>
</feature>
<feature type="binding site" evidence="4">
    <location>
        <position position="463"/>
    </location>
    <ligand>
        <name>Ca(2+)</name>
        <dbReference type="ChEBI" id="CHEBI:29108"/>
        <label>2</label>
    </ligand>
</feature>
<feature type="binding site" evidence="4">
    <location>
        <position position="465"/>
    </location>
    <ligand>
        <name>Ca(2+)</name>
        <dbReference type="ChEBI" id="CHEBI:29108"/>
        <label>2</label>
    </ligand>
</feature>
<feature type="binding site" evidence="4">
    <location>
        <position position="467"/>
    </location>
    <ligand>
        <name>Ca(2+)</name>
        <dbReference type="ChEBI" id="CHEBI:29108"/>
        <label>2</label>
    </ligand>
</feature>
<feature type="binding site" evidence="4">
    <location>
        <position position="469"/>
    </location>
    <ligand>
        <name>Ca(2+)</name>
        <dbReference type="ChEBI" id="CHEBI:29108"/>
        <label>2</label>
    </ligand>
</feature>
<feature type="binding site" evidence="4">
    <location>
        <position position="474"/>
    </location>
    <ligand>
        <name>Ca(2+)</name>
        <dbReference type="ChEBI" id="CHEBI:29108"/>
        <label>2</label>
    </ligand>
</feature>
<feature type="binding site" evidence="4">
    <location>
        <position position="499"/>
    </location>
    <ligand>
        <name>Ca(2+)</name>
        <dbReference type="ChEBI" id="CHEBI:29108"/>
        <label>3</label>
    </ligand>
</feature>
<feature type="binding site" evidence="4">
    <location>
        <position position="501"/>
    </location>
    <ligand>
        <name>Ca(2+)</name>
        <dbReference type="ChEBI" id="CHEBI:29108"/>
        <label>3</label>
    </ligand>
</feature>
<feature type="binding site" evidence="4">
    <location>
        <position position="503"/>
    </location>
    <ligand>
        <name>Ca(2+)</name>
        <dbReference type="ChEBI" id="CHEBI:29108"/>
        <label>3</label>
    </ligand>
</feature>
<feature type="binding site" evidence="4">
    <location>
        <position position="505"/>
    </location>
    <ligand>
        <name>Ca(2+)</name>
        <dbReference type="ChEBI" id="CHEBI:29108"/>
        <label>3</label>
    </ligand>
</feature>
<feature type="binding site" evidence="4">
    <location>
        <position position="510"/>
    </location>
    <ligand>
        <name>Ca(2+)</name>
        <dbReference type="ChEBI" id="CHEBI:29108"/>
        <label>3</label>
    </ligand>
</feature>
<feature type="binding site" evidence="4">
    <location>
        <position position="533"/>
    </location>
    <ligand>
        <name>Ca(2+)</name>
        <dbReference type="ChEBI" id="CHEBI:29108"/>
        <label>4</label>
    </ligand>
</feature>
<feature type="binding site" evidence="4">
    <location>
        <position position="535"/>
    </location>
    <ligand>
        <name>Ca(2+)</name>
        <dbReference type="ChEBI" id="CHEBI:29108"/>
        <label>4</label>
    </ligand>
</feature>
<feature type="binding site" evidence="4">
    <location>
        <position position="537"/>
    </location>
    <ligand>
        <name>Ca(2+)</name>
        <dbReference type="ChEBI" id="CHEBI:29108"/>
        <label>4</label>
    </ligand>
</feature>
<feature type="binding site" evidence="4">
    <location>
        <position position="539"/>
    </location>
    <ligand>
        <name>Ca(2+)</name>
        <dbReference type="ChEBI" id="CHEBI:29108"/>
        <label>4</label>
    </ligand>
</feature>
<feature type="binding site" evidence="4">
    <location>
        <position position="544"/>
    </location>
    <ligand>
        <name>Ca(2+)</name>
        <dbReference type="ChEBI" id="CHEBI:29108"/>
        <label>4</label>
    </ligand>
</feature>
<feature type="lipid moiety-binding region" description="N-myristoyl glycine" evidence="2">
    <location>
        <position position="2"/>
    </location>
</feature>
<gene>
    <name evidence="6" type="primary">CPK11</name>
    <name evidence="11" type="ordered locus">Os03g0789000</name>
    <name evidence="10" type="ordered locus">LOC_Os03g57510</name>
    <name evidence="12" type="ORF">OsJ_12886</name>
    <name evidence="8" type="ORF">OSJNBa0087O09.4</name>
    <name evidence="9" type="ORF">OSJNBb0024J04.26</name>
</gene>
<sequence>MGNNCVGPSAAGQNGFFANVALWRPRPADAAPPALPPPSSAPSDQAPEPVTIPPSEHSSHHSSRSTDPSTPTSAAEQPANKAAPKVKRVQSAGLLADSVLKRDVNTARLKDLYTIGKKLGQGQFGTTYLCVEKATGREFACKSIAKRKLLTQEDVEDVRREIQIMHHLAGHANVVSIVGAYEDAVAVQLVMELCAGGELFDRIIQRGHYSEKAAAQLARVIVGVIEACHSLGVMHRDLKPENFLFIHQKEDSPLKAIDFGLSIFFKPGETFTDVVGSPYYVAPEVLMKHYGREVDVWSAGVIIYILLSGVPPFWDESEQGIFEQVLKGDLDFSSEPWPNISESAKDLVRKMLIRDPKKRLTAHEALCHPWVCVDGVAPDKPLDSAVLSRLKQFSAMNKLKKMALRVIAESLSEEEIAGLKEMFKMLDTDNSGHITLEELKTGLQRVGANLMDSEIDALMEAADIDNSGTIDYGEFIAATLHINKVEKEDKLFAAFSYFDKDGSGYITQDELQKACEEFGIGDTRIEDIIGDIDQDNDGRIDYNEFVEMMQKGNNAMGKMGQHSTGNFGLGEALKLR</sequence>
<proteinExistence type="inferred from homology"/>
<accession>Q852N6</accession>
<accession>A0A0P0W4I6</accession>
<keyword id="KW-0067">ATP-binding</keyword>
<keyword id="KW-0106">Calcium</keyword>
<keyword id="KW-0418">Kinase</keyword>
<keyword id="KW-0449">Lipoprotein</keyword>
<keyword id="KW-0472">Membrane</keyword>
<keyword id="KW-0479">Metal-binding</keyword>
<keyword id="KW-0519">Myristate</keyword>
<keyword id="KW-0547">Nucleotide-binding</keyword>
<keyword id="KW-1185">Reference proteome</keyword>
<keyword id="KW-0677">Repeat</keyword>
<keyword id="KW-0723">Serine/threonine-protein kinase</keyword>
<keyword id="KW-0808">Transferase</keyword>
<evidence type="ECO:0000250" key="1">
    <source>
        <dbReference type="UniProtKB" id="Q06850"/>
    </source>
</evidence>
<evidence type="ECO:0000255" key="2"/>
<evidence type="ECO:0000255" key="3">
    <source>
        <dbReference type="PROSITE-ProRule" id="PRU00159"/>
    </source>
</evidence>
<evidence type="ECO:0000255" key="4">
    <source>
        <dbReference type="PROSITE-ProRule" id="PRU00448"/>
    </source>
</evidence>
<evidence type="ECO:0000256" key="5">
    <source>
        <dbReference type="SAM" id="MobiDB-lite"/>
    </source>
</evidence>
<evidence type="ECO:0000303" key="6">
    <source>
    </source>
</evidence>
<evidence type="ECO:0000305" key="7"/>
<evidence type="ECO:0000312" key="8">
    <source>
        <dbReference type="EMBL" id="AAO24908.1"/>
    </source>
</evidence>
<evidence type="ECO:0000312" key="9">
    <source>
        <dbReference type="EMBL" id="AAT75264.1"/>
    </source>
</evidence>
<evidence type="ECO:0000312" key="10">
    <source>
        <dbReference type="EMBL" id="ABF99263.1"/>
    </source>
</evidence>
<evidence type="ECO:0000312" key="11">
    <source>
        <dbReference type="EMBL" id="BAF13421.1"/>
    </source>
</evidence>
<evidence type="ECO:0000312" key="12">
    <source>
        <dbReference type="EMBL" id="EAZ28850.1"/>
    </source>
</evidence>
<protein>
    <recommendedName>
        <fullName evidence="7">Calcium-dependent protein kinase 11</fullName>
        <shortName evidence="7">OsCDPK11</shortName>
        <shortName evidence="6">OsCPK11</shortName>
        <ecNumber evidence="7">2.7.11.1</ecNumber>
    </recommendedName>
</protein>
<name>CDPKB_ORYSJ</name>